<feature type="chain" id="PRO_0000319729" description="Phosphoribosyl-AMP cyclohydrolase">
    <location>
        <begin position="1"/>
        <end position="129"/>
    </location>
</feature>
<feature type="binding site" evidence="1">
    <location>
        <position position="85"/>
    </location>
    <ligand>
        <name>Mg(2+)</name>
        <dbReference type="ChEBI" id="CHEBI:18420"/>
    </ligand>
</feature>
<feature type="binding site" evidence="1">
    <location>
        <position position="86"/>
    </location>
    <ligand>
        <name>Zn(2+)</name>
        <dbReference type="ChEBI" id="CHEBI:29105"/>
        <note>ligand shared between dimeric partners</note>
    </ligand>
</feature>
<feature type="binding site" evidence="1">
    <location>
        <position position="87"/>
    </location>
    <ligand>
        <name>Mg(2+)</name>
        <dbReference type="ChEBI" id="CHEBI:18420"/>
    </ligand>
</feature>
<feature type="binding site" evidence="1">
    <location>
        <position position="89"/>
    </location>
    <ligand>
        <name>Mg(2+)</name>
        <dbReference type="ChEBI" id="CHEBI:18420"/>
    </ligand>
</feature>
<feature type="binding site" evidence="1">
    <location>
        <position position="102"/>
    </location>
    <ligand>
        <name>Zn(2+)</name>
        <dbReference type="ChEBI" id="CHEBI:29105"/>
        <note>ligand shared between dimeric partners</note>
    </ligand>
</feature>
<feature type="binding site" evidence="1">
    <location>
        <position position="109"/>
    </location>
    <ligand>
        <name>Zn(2+)</name>
        <dbReference type="ChEBI" id="CHEBI:29105"/>
        <note>ligand shared between dimeric partners</note>
    </ligand>
</feature>
<reference key="1">
    <citation type="submission" date="2007-06" db="EMBL/GenBank/DDBJ databases">
        <title>Complete sequence of Methanococcus maripaludis C7.</title>
        <authorList>
            <consortium name="US DOE Joint Genome Institute"/>
            <person name="Copeland A."/>
            <person name="Lucas S."/>
            <person name="Lapidus A."/>
            <person name="Barry K."/>
            <person name="Glavina del Rio T."/>
            <person name="Dalin E."/>
            <person name="Tice H."/>
            <person name="Pitluck S."/>
            <person name="Clum A."/>
            <person name="Schmutz J."/>
            <person name="Larimer F."/>
            <person name="Land M."/>
            <person name="Hauser L."/>
            <person name="Kyrpides N."/>
            <person name="Anderson I."/>
            <person name="Sieprawska-Lupa M."/>
            <person name="Whitman W.B."/>
            <person name="Richardson P."/>
        </authorList>
    </citation>
    <scope>NUCLEOTIDE SEQUENCE [LARGE SCALE GENOMIC DNA]</scope>
    <source>
        <strain>C7 / ATCC BAA-1331</strain>
    </source>
</reference>
<name>HIS3_METM7</name>
<accession>A6VIS0</accession>
<comment type="function">
    <text evidence="1">Catalyzes the hydrolysis of the adenine ring of phosphoribosyl-AMP.</text>
</comment>
<comment type="catalytic activity">
    <reaction evidence="1">
        <text>1-(5-phospho-beta-D-ribosyl)-5'-AMP + H2O = 1-(5-phospho-beta-D-ribosyl)-5-[(5-phospho-beta-D-ribosylamino)methylideneamino]imidazole-4-carboxamide</text>
        <dbReference type="Rhea" id="RHEA:20049"/>
        <dbReference type="ChEBI" id="CHEBI:15377"/>
        <dbReference type="ChEBI" id="CHEBI:58435"/>
        <dbReference type="ChEBI" id="CHEBI:59457"/>
        <dbReference type="EC" id="3.5.4.19"/>
    </reaction>
</comment>
<comment type="cofactor">
    <cofactor evidence="1">
        <name>Mg(2+)</name>
        <dbReference type="ChEBI" id="CHEBI:18420"/>
    </cofactor>
    <text evidence="1">Binds 1 Mg(2+) ion per subunit.</text>
</comment>
<comment type="cofactor">
    <cofactor evidence="1">
        <name>Zn(2+)</name>
        <dbReference type="ChEBI" id="CHEBI:29105"/>
    </cofactor>
    <text evidence="1">Binds 1 zinc ion per subunit.</text>
</comment>
<comment type="pathway">
    <text evidence="1">Amino-acid biosynthesis; L-histidine biosynthesis; L-histidine from 5-phospho-alpha-D-ribose 1-diphosphate: step 3/9.</text>
</comment>
<comment type="subunit">
    <text evidence="1">Homodimer.</text>
</comment>
<comment type="subcellular location">
    <subcellularLocation>
        <location evidence="1">Cytoplasm</location>
    </subcellularLocation>
</comment>
<comment type="similarity">
    <text evidence="1">Belongs to the PRA-CH family.</text>
</comment>
<evidence type="ECO:0000255" key="1">
    <source>
        <dbReference type="HAMAP-Rule" id="MF_01021"/>
    </source>
</evidence>
<protein>
    <recommendedName>
        <fullName evidence="1">Phosphoribosyl-AMP cyclohydrolase</fullName>
        <shortName evidence="1">PRA-CH</shortName>
        <ecNumber evidence="1">3.5.4.19</ecNumber>
    </recommendedName>
</protein>
<organism>
    <name type="scientific">Methanococcus maripaludis (strain C7 / ATCC BAA-1331)</name>
    <dbReference type="NCBI Taxonomy" id="426368"/>
    <lineage>
        <taxon>Archaea</taxon>
        <taxon>Methanobacteriati</taxon>
        <taxon>Methanobacteriota</taxon>
        <taxon>Methanomada group</taxon>
        <taxon>Methanococci</taxon>
        <taxon>Methanococcales</taxon>
        <taxon>Methanococcaceae</taxon>
        <taxon>Methanococcus</taxon>
    </lineage>
</organism>
<keyword id="KW-0028">Amino-acid biosynthesis</keyword>
<keyword id="KW-0963">Cytoplasm</keyword>
<keyword id="KW-0368">Histidine biosynthesis</keyword>
<keyword id="KW-0378">Hydrolase</keyword>
<keyword id="KW-0460">Magnesium</keyword>
<keyword id="KW-0479">Metal-binding</keyword>
<keyword id="KW-0862">Zinc</keyword>
<dbReference type="EC" id="3.5.4.19" evidence="1"/>
<dbReference type="EMBL" id="CP000745">
    <property type="protein sequence ID" value="ABR66346.1"/>
    <property type="molecule type" value="Genomic_DNA"/>
</dbReference>
<dbReference type="SMR" id="A6VIS0"/>
<dbReference type="STRING" id="426368.MmarC7_1283"/>
<dbReference type="KEGG" id="mmz:MmarC7_1283"/>
<dbReference type="eggNOG" id="arCOG02676">
    <property type="taxonomic scope" value="Archaea"/>
</dbReference>
<dbReference type="HOGENOM" id="CLU_048577_5_3_2"/>
<dbReference type="OrthoDB" id="5853at2157"/>
<dbReference type="UniPathway" id="UPA00031">
    <property type="reaction ID" value="UER00008"/>
</dbReference>
<dbReference type="GO" id="GO:0005737">
    <property type="term" value="C:cytoplasm"/>
    <property type="evidence" value="ECO:0007669"/>
    <property type="project" value="UniProtKB-SubCell"/>
</dbReference>
<dbReference type="GO" id="GO:0000287">
    <property type="term" value="F:magnesium ion binding"/>
    <property type="evidence" value="ECO:0007669"/>
    <property type="project" value="UniProtKB-UniRule"/>
</dbReference>
<dbReference type="GO" id="GO:0004635">
    <property type="term" value="F:phosphoribosyl-AMP cyclohydrolase activity"/>
    <property type="evidence" value="ECO:0007669"/>
    <property type="project" value="UniProtKB-UniRule"/>
</dbReference>
<dbReference type="GO" id="GO:0008270">
    <property type="term" value="F:zinc ion binding"/>
    <property type="evidence" value="ECO:0007669"/>
    <property type="project" value="UniProtKB-UniRule"/>
</dbReference>
<dbReference type="GO" id="GO:0000105">
    <property type="term" value="P:L-histidine biosynthetic process"/>
    <property type="evidence" value="ECO:0007669"/>
    <property type="project" value="UniProtKB-UniRule"/>
</dbReference>
<dbReference type="FunFam" id="3.10.20.810:FF:000001">
    <property type="entry name" value="Histidine biosynthesis bifunctional protein HisIE"/>
    <property type="match status" value="1"/>
</dbReference>
<dbReference type="Gene3D" id="3.10.20.810">
    <property type="entry name" value="Phosphoribosyl-AMP cyclohydrolase"/>
    <property type="match status" value="1"/>
</dbReference>
<dbReference type="HAMAP" id="MF_01021">
    <property type="entry name" value="HisI"/>
    <property type="match status" value="1"/>
</dbReference>
<dbReference type="InterPro" id="IPR026660">
    <property type="entry name" value="PRA-CH"/>
</dbReference>
<dbReference type="InterPro" id="IPR002496">
    <property type="entry name" value="PRib_AMP_CycHydrolase_dom"/>
</dbReference>
<dbReference type="InterPro" id="IPR038019">
    <property type="entry name" value="PRib_AMP_CycHydrolase_sf"/>
</dbReference>
<dbReference type="NCBIfam" id="NF000768">
    <property type="entry name" value="PRK00051.1"/>
    <property type="match status" value="1"/>
</dbReference>
<dbReference type="PANTHER" id="PTHR42945">
    <property type="entry name" value="HISTIDINE BIOSYNTHESIS BIFUNCTIONAL PROTEIN"/>
    <property type="match status" value="1"/>
</dbReference>
<dbReference type="PANTHER" id="PTHR42945:SF1">
    <property type="entry name" value="HISTIDINE BIOSYNTHESIS BIFUNCTIONAL PROTEIN HIS7"/>
    <property type="match status" value="1"/>
</dbReference>
<dbReference type="Pfam" id="PF01502">
    <property type="entry name" value="PRA-CH"/>
    <property type="match status" value="1"/>
</dbReference>
<dbReference type="SUPFAM" id="SSF141734">
    <property type="entry name" value="HisI-like"/>
    <property type="match status" value="1"/>
</dbReference>
<sequence>MDLDTKEIIKNMDLKFRNIDGKKLLLAISTDKDRNILMTAFMNEESLEKSIETGFMHYYSTSRNKLWRKGEESGNVQKIIDVFRDCDGDALLFTVEQTGWACHEGYMSCFHNKIDLNTGKFTVVGNKLD</sequence>
<proteinExistence type="inferred from homology"/>
<gene>
    <name evidence="1" type="primary">hisI</name>
    <name type="ordered locus">MmarC7_1283</name>
</gene>